<sequence length="90" mass="10453">MEYSYPLNPDWTTEEMTIVVQFLEAIERAYEKGIDTQELKDKYRAFKHVVPAKGEEKRIGIDFEKASGYSAYKVMQLVKNATTSKIKMQP</sequence>
<feature type="chain" id="PRO_1000149545" description="UPF0223 protein LMHCC_1569">
    <location>
        <begin position="1"/>
        <end position="90"/>
    </location>
</feature>
<protein>
    <recommendedName>
        <fullName evidence="1">UPF0223 protein LMHCC_1569</fullName>
    </recommendedName>
</protein>
<comment type="similarity">
    <text evidence="1">Belongs to the UPF0223 family.</text>
</comment>
<reference key="1">
    <citation type="journal article" date="2011" name="J. Bacteriol.">
        <title>Genome sequence of lineage III Listeria monocytogenes strain HCC23.</title>
        <authorList>
            <person name="Steele C.L."/>
            <person name="Donaldson J.R."/>
            <person name="Paul D."/>
            <person name="Banes M.M."/>
            <person name="Arick T."/>
            <person name="Bridges S.M."/>
            <person name="Lawrence M.L."/>
        </authorList>
    </citation>
    <scope>NUCLEOTIDE SEQUENCE [LARGE SCALE GENOMIC DNA]</scope>
    <source>
        <strain>HCC23</strain>
    </source>
</reference>
<proteinExistence type="inferred from homology"/>
<name>Y1569_LISMH</name>
<dbReference type="EMBL" id="CP001175">
    <property type="protein sequence ID" value="ACK39913.1"/>
    <property type="molecule type" value="Genomic_DNA"/>
</dbReference>
<dbReference type="RefSeq" id="WP_003730096.1">
    <property type="nucleotide sequence ID" value="NC_011660.1"/>
</dbReference>
<dbReference type="SMR" id="B8DCF0"/>
<dbReference type="KEGG" id="lmh:LMHCC_1569"/>
<dbReference type="HOGENOM" id="CLU_166693_0_0_9"/>
<dbReference type="Gene3D" id="1.10.220.80">
    <property type="entry name" value="BH2638-like"/>
    <property type="match status" value="1"/>
</dbReference>
<dbReference type="HAMAP" id="MF_01041">
    <property type="entry name" value="UPF0223"/>
    <property type="match status" value="1"/>
</dbReference>
<dbReference type="InterPro" id="IPR023324">
    <property type="entry name" value="BH2638-like_sf"/>
</dbReference>
<dbReference type="InterPro" id="IPR007920">
    <property type="entry name" value="UPF0223"/>
</dbReference>
<dbReference type="NCBIfam" id="NF003353">
    <property type="entry name" value="PRK04387.1"/>
    <property type="match status" value="1"/>
</dbReference>
<dbReference type="Pfam" id="PF05256">
    <property type="entry name" value="UPF0223"/>
    <property type="match status" value="1"/>
</dbReference>
<dbReference type="PIRSF" id="PIRSF037260">
    <property type="entry name" value="UPF0223"/>
    <property type="match status" value="1"/>
</dbReference>
<dbReference type="SUPFAM" id="SSF158504">
    <property type="entry name" value="BH2638-like"/>
    <property type="match status" value="1"/>
</dbReference>
<accession>B8DCF0</accession>
<gene>
    <name type="ordered locus">LMHCC_1569</name>
</gene>
<evidence type="ECO:0000255" key="1">
    <source>
        <dbReference type="HAMAP-Rule" id="MF_01041"/>
    </source>
</evidence>
<organism>
    <name type="scientific">Listeria monocytogenes serotype 4a (strain HCC23)</name>
    <dbReference type="NCBI Taxonomy" id="552536"/>
    <lineage>
        <taxon>Bacteria</taxon>
        <taxon>Bacillati</taxon>
        <taxon>Bacillota</taxon>
        <taxon>Bacilli</taxon>
        <taxon>Bacillales</taxon>
        <taxon>Listeriaceae</taxon>
        <taxon>Listeria</taxon>
    </lineage>
</organism>